<accession>Q7ZZL8</accession>
<dbReference type="EMBL" id="AY265159">
    <property type="protein sequence ID" value="AAP21810.1"/>
    <property type="molecule type" value="mRNA"/>
</dbReference>
<dbReference type="RefSeq" id="NP_989729.1">
    <property type="nucleotide sequence ID" value="NM_204398.2"/>
</dbReference>
<dbReference type="RefSeq" id="XP_015154166.2">
    <property type="nucleotide sequence ID" value="XM_015298680.4"/>
</dbReference>
<dbReference type="RefSeq" id="XP_046788795.1">
    <property type="nucleotide sequence ID" value="XM_046932839.1"/>
</dbReference>
<dbReference type="SMR" id="Q7ZZL8"/>
<dbReference type="FunCoup" id="Q7ZZL8">
    <property type="interactions" value="98"/>
</dbReference>
<dbReference type="STRING" id="9031.ENSGALP00000045291"/>
<dbReference type="PaxDb" id="9031-ENSGALP00000001317"/>
<dbReference type="Ensembl" id="ENSGALT00010065352.1">
    <property type="protein sequence ID" value="ENSGALP00010039779.1"/>
    <property type="gene ID" value="ENSGALG00010026950.1"/>
</dbReference>
<dbReference type="GeneID" id="378916"/>
<dbReference type="KEGG" id="gga:378916"/>
<dbReference type="CTD" id="222662"/>
<dbReference type="VEuPathDB" id="HostDB:geneid_378916"/>
<dbReference type="eggNOG" id="KOG4026">
    <property type="taxonomic scope" value="Eukaryota"/>
</dbReference>
<dbReference type="GeneTree" id="ENSGT00990000203541"/>
<dbReference type="HOGENOM" id="CLU_084868_1_2_1"/>
<dbReference type="InParanoid" id="Q7ZZL8"/>
<dbReference type="OMA" id="SMVVFIQ"/>
<dbReference type="OrthoDB" id="5873721at2759"/>
<dbReference type="PhylomeDB" id="Q7ZZL8"/>
<dbReference type="PRO" id="PR:Q7ZZL8"/>
<dbReference type="Proteomes" id="UP000000539">
    <property type="component" value="Chromosome 26"/>
</dbReference>
<dbReference type="Bgee" id="ENSGALG00000039170">
    <property type="expression patterns" value="Expressed in brain and 13 other cell types or tissues"/>
</dbReference>
<dbReference type="GO" id="GO:0005886">
    <property type="term" value="C:plasma membrane"/>
    <property type="evidence" value="ECO:0000318"/>
    <property type="project" value="GO_Central"/>
</dbReference>
<dbReference type="GO" id="GO:0050974">
    <property type="term" value="P:detection of mechanical stimulus involved in sensory perception"/>
    <property type="evidence" value="ECO:0000318"/>
    <property type="project" value="GO_Central"/>
</dbReference>
<dbReference type="GO" id="GO:0007605">
    <property type="term" value="P:sensory perception of sound"/>
    <property type="evidence" value="ECO:0000318"/>
    <property type="project" value="GO_Central"/>
</dbReference>
<dbReference type="InterPro" id="IPR019372">
    <property type="entry name" value="LHFPL"/>
</dbReference>
<dbReference type="PANTHER" id="PTHR12489:SF18">
    <property type="entry name" value="LHFPL TETRASPAN SUBFAMILY MEMBER 5 PROTEIN"/>
    <property type="match status" value="1"/>
</dbReference>
<dbReference type="PANTHER" id="PTHR12489">
    <property type="entry name" value="LIPOMA HMGIC FUSION PARTNER-LIKE PROTEIN"/>
    <property type="match status" value="1"/>
</dbReference>
<dbReference type="Pfam" id="PF10242">
    <property type="entry name" value="L_HMGIC_fpl"/>
    <property type="match status" value="1"/>
</dbReference>
<reference key="1">
    <citation type="submission" date="2003-03" db="EMBL/GenBank/DDBJ databases">
        <authorList>
            <person name="Huang C.Q."/>
            <person name="Wu S.L."/>
            <person name="Liu S."/>
        </authorList>
    </citation>
    <scope>NUCLEOTIDE SEQUENCE [MRNA]</scope>
</reference>
<feature type="chain" id="PRO_0000285925" description="LHFPL tetraspan subfamily member 5 protein">
    <location>
        <begin position="1"/>
        <end position="221"/>
    </location>
</feature>
<feature type="topological domain" description="Cytoplasmic" evidence="3">
    <location>
        <begin position="1"/>
        <end position="24"/>
    </location>
</feature>
<feature type="transmembrane region" description="Helical" evidence="3">
    <location>
        <begin position="25"/>
        <end position="45"/>
    </location>
</feature>
<feature type="topological domain" description="Extracellular" evidence="3">
    <location>
        <begin position="46"/>
        <end position="98"/>
    </location>
</feature>
<feature type="transmembrane region" description="Helical" evidence="3">
    <location>
        <begin position="99"/>
        <end position="119"/>
    </location>
</feature>
<feature type="topological domain" description="Cytoplasmic" evidence="3">
    <location>
        <begin position="120"/>
        <end position="128"/>
    </location>
</feature>
<feature type="transmembrane region" description="Helical" evidence="3">
    <location>
        <begin position="129"/>
        <end position="149"/>
    </location>
</feature>
<feature type="topological domain" description="Extracellular" evidence="3">
    <location>
        <begin position="150"/>
        <end position="179"/>
    </location>
</feature>
<feature type="transmembrane region" description="Helical" evidence="3">
    <location>
        <begin position="180"/>
        <end position="200"/>
    </location>
</feature>
<feature type="topological domain" description="Cytoplasmic" evidence="3">
    <location>
        <begin position="201"/>
        <end position="221"/>
    </location>
</feature>
<comment type="function">
    <text evidence="1">Probable component of the mechanotransducer (MET) non-specific cation channel complex.</text>
</comment>
<comment type="subcellular location">
    <subcellularLocation>
        <location evidence="1">Cell membrane</location>
        <topology evidence="3">Multi-pass membrane protein</topology>
    </subcellularLocation>
</comment>
<comment type="similarity">
    <text evidence="4">Belongs to the LHFP family.</text>
</comment>
<proteinExistence type="evidence at transcript level"/>
<gene>
    <name evidence="2" type="primary">LHFPL5</name>
    <name type="synonym">PMP22A</name>
    <name evidence="1" type="synonym">TMHS</name>
</gene>
<protein>
    <recommendedName>
        <fullName evidence="2">LHFPL tetraspan subfamily member 5 protein</fullName>
    </recommendedName>
    <alternativeName>
        <fullName evidence="2">Lipoma HMGIC fusion partner-like 5 protein</fullName>
    </alternativeName>
    <alternativeName>
        <fullName>Peripheral myelin protein 22a</fullName>
    </alternativeName>
</protein>
<evidence type="ECO:0000250" key="1">
    <source>
        <dbReference type="UniProtKB" id="Q4KL25"/>
    </source>
</evidence>
<evidence type="ECO:0000250" key="2">
    <source>
        <dbReference type="UniProtKB" id="Q8TAF8"/>
    </source>
</evidence>
<evidence type="ECO:0000255" key="3"/>
<evidence type="ECO:0000305" key="4"/>
<sequence>MPKLLPAQEAARIYHTNYVRNARAMGVLWALFTLCFSILMVVTFIQPYWIGDSIDTPQAGYFGLFSYCIGNALTGELICKGSPLDFGTIPSSAFKTAMFFVGISTFLIIGSILCFSLFFFCNAATVYKVCAWMQLAAATGLMIGCLIYPDGWDSSEVKRMCGDKTDKYTLGACTVRWAYILCIIGILDALILSFLAFVLGNRQDNLLPSDFKVESKEEGNE</sequence>
<name>LHPL5_CHICK</name>
<keyword id="KW-1003">Cell membrane</keyword>
<keyword id="KW-0472">Membrane</keyword>
<keyword id="KW-1185">Reference proteome</keyword>
<keyword id="KW-0812">Transmembrane</keyword>
<keyword id="KW-1133">Transmembrane helix</keyword>
<organism>
    <name type="scientific">Gallus gallus</name>
    <name type="common">Chicken</name>
    <dbReference type="NCBI Taxonomy" id="9031"/>
    <lineage>
        <taxon>Eukaryota</taxon>
        <taxon>Metazoa</taxon>
        <taxon>Chordata</taxon>
        <taxon>Craniata</taxon>
        <taxon>Vertebrata</taxon>
        <taxon>Euteleostomi</taxon>
        <taxon>Archelosauria</taxon>
        <taxon>Archosauria</taxon>
        <taxon>Dinosauria</taxon>
        <taxon>Saurischia</taxon>
        <taxon>Theropoda</taxon>
        <taxon>Coelurosauria</taxon>
        <taxon>Aves</taxon>
        <taxon>Neognathae</taxon>
        <taxon>Galloanserae</taxon>
        <taxon>Galliformes</taxon>
        <taxon>Phasianidae</taxon>
        <taxon>Phasianinae</taxon>
        <taxon>Gallus</taxon>
    </lineage>
</organism>